<evidence type="ECO:0000255" key="1">
    <source>
        <dbReference type="HAMAP-Rule" id="MF_00201"/>
    </source>
</evidence>
<feature type="chain" id="PRO_1000077723" description="DNA repair protein RecO">
    <location>
        <begin position="1"/>
        <end position="248"/>
    </location>
</feature>
<dbReference type="EMBL" id="CP000764">
    <property type="protein sequence ID" value="ABS23251.1"/>
    <property type="molecule type" value="Genomic_DNA"/>
</dbReference>
<dbReference type="RefSeq" id="WP_012095488.1">
    <property type="nucleotide sequence ID" value="NC_009674.1"/>
</dbReference>
<dbReference type="SMR" id="A7GSZ3"/>
<dbReference type="STRING" id="315749.Bcer98_3024"/>
<dbReference type="GeneID" id="33898272"/>
<dbReference type="KEGG" id="bcy:Bcer98_3024"/>
<dbReference type="eggNOG" id="COG1381">
    <property type="taxonomic scope" value="Bacteria"/>
</dbReference>
<dbReference type="HOGENOM" id="CLU_066632_4_0_9"/>
<dbReference type="OrthoDB" id="9797083at2"/>
<dbReference type="Proteomes" id="UP000002300">
    <property type="component" value="Chromosome"/>
</dbReference>
<dbReference type="GO" id="GO:0043590">
    <property type="term" value="C:bacterial nucleoid"/>
    <property type="evidence" value="ECO:0007669"/>
    <property type="project" value="TreeGrafter"/>
</dbReference>
<dbReference type="GO" id="GO:0006310">
    <property type="term" value="P:DNA recombination"/>
    <property type="evidence" value="ECO:0007669"/>
    <property type="project" value="UniProtKB-UniRule"/>
</dbReference>
<dbReference type="GO" id="GO:0006302">
    <property type="term" value="P:double-strand break repair"/>
    <property type="evidence" value="ECO:0007669"/>
    <property type="project" value="TreeGrafter"/>
</dbReference>
<dbReference type="Gene3D" id="2.40.50.140">
    <property type="entry name" value="Nucleic acid-binding proteins"/>
    <property type="match status" value="1"/>
</dbReference>
<dbReference type="Gene3D" id="1.20.1440.120">
    <property type="entry name" value="Recombination protein O, C-terminal domain"/>
    <property type="match status" value="1"/>
</dbReference>
<dbReference type="HAMAP" id="MF_00201">
    <property type="entry name" value="RecO"/>
    <property type="match status" value="1"/>
</dbReference>
<dbReference type="InterPro" id="IPR037278">
    <property type="entry name" value="ARFGAP/RecO"/>
</dbReference>
<dbReference type="InterPro" id="IPR022572">
    <property type="entry name" value="DNA_rep/recomb_RecO_N"/>
</dbReference>
<dbReference type="InterPro" id="IPR012340">
    <property type="entry name" value="NA-bd_OB-fold"/>
</dbReference>
<dbReference type="InterPro" id="IPR003717">
    <property type="entry name" value="RecO"/>
</dbReference>
<dbReference type="InterPro" id="IPR042242">
    <property type="entry name" value="RecO_C"/>
</dbReference>
<dbReference type="NCBIfam" id="TIGR00613">
    <property type="entry name" value="reco"/>
    <property type="match status" value="1"/>
</dbReference>
<dbReference type="PANTHER" id="PTHR33991">
    <property type="entry name" value="DNA REPAIR PROTEIN RECO"/>
    <property type="match status" value="1"/>
</dbReference>
<dbReference type="PANTHER" id="PTHR33991:SF1">
    <property type="entry name" value="DNA REPAIR PROTEIN RECO"/>
    <property type="match status" value="1"/>
</dbReference>
<dbReference type="Pfam" id="PF02565">
    <property type="entry name" value="RecO_C"/>
    <property type="match status" value="1"/>
</dbReference>
<dbReference type="Pfam" id="PF11967">
    <property type="entry name" value="RecO_N"/>
    <property type="match status" value="1"/>
</dbReference>
<dbReference type="SUPFAM" id="SSF57863">
    <property type="entry name" value="ArfGap/RecO-like zinc finger"/>
    <property type="match status" value="1"/>
</dbReference>
<dbReference type="SUPFAM" id="SSF50249">
    <property type="entry name" value="Nucleic acid-binding proteins"/>
    <property type="match status" value="1"/>
</dbReference>
<organism>
    <name type="scientific">Bacillus cytotoxicus (strain DSM 22905 / CIP 110041 / 391-98 / NVH 391-98)</name>
    <dbReference type="NCBI Taxonomy" id="315749"/>
    <lineage>
        <taxon>Bacteria</taxon>
        <taxon>Bacillati</taxon>
        <taxon>Bacillota</taxon>
        <taxon>Bacilli</taxon>
        <taxon>Bacillales</taxon>
        <taxon>Bacillaceae</taxon>
        <taxon>Bacillus</taxon>
        <taxon>Bacillus cereus group</taxon>
    </lineage>
</organism>
<sequence>MFQKVEGIVIRTTDYGETNKIVTIFSREFGKISVMARGAKKPKSRLASISQLMTHGHFLIQMGSGLGTLQQGEMISSMKEIREDIFLTAYASFIVELTDKATEDKKNNPYLFEMLYQTLHYMCDGVDPEVLSLIYQTKMLPVLGMHPYFDTCAICHQETDFVAFSVREGGFLCFRHAEQDPYRIPVGEAVHKLLRLFYHFDLGRLGNVSVKDETKRQIRTVLNTYYDEYCGIYLKSRRFLEQLDKFQI</sequence>
<protein>
    <recommendedName>
        <fullName evidence="1">DNA repair protein RecO</fullName>
    </recommendedName>
    <alternativeName>
        <fullName evidence="1">Recombination protein O</fullName>
    </alternativeName>
</protein>
<name>RECO_BACCN</name>
<proteinExistence type="inferred from homology"/>
<keyword id="KW-0227">DNA damage</keyword>
<keyword id="KW-0233">DNA recombination</keyword>
<keyword id="KW-0234">DNA repair</keyword>
<reference key="1">
    <citation type="journal article" date="2008" name="Chem. Biol. Interact.">
        <title>Extending the Bacillus cereus group genomics to putative food-borne pathogens of different toxicity.</title>
        <authorList>
            <person name="Lapidus A."/>
            <person name="Goltsman E."/>
            <person name="Auger S."/>
            <person name="Galleron N."/>
            <person name="Segurens B."/>
            <person name="Dossat C."/>
            <person name="Land M.L."/>
            <person name="Broussolle V."/>
            <person name="Brillard J."/>
            <person name="Guinebretiere M.-H."/>
            <person name="Sanchis V."/>
            <person name="Nguen-the C."/>
            <person name="Lereclus D."/>
            <person name="Richardson P."/>
            <person name="Wincker P."/>
            <person name="Weissenbach J."/>
            <person name="Ehrlich S.D."/>
            <person name="Sorokin A."/>
        </authorList>
    </citation>
    <scope>NUCLEOTIDE SEQUENCE [LARGE SCALE GENOMIC DNA]</scope>
    <source>
        <strain>DSM 22905 / CIP 110041 / 391-98 / NVH 391-98</strain>
    </source>
</reference>
<accession>A7GSZ3</accession>
<comment type="function">
    <text evidence="1">Involved in DNA repair and RecF pathway recombination.</text>
</comment>
<comment type="similarity">
    <text evidence="1">Belongs to the RecO family.</text>
</comment>
<gene>
    <name evidence="1" type="primary">recO</name>
    <name type="ordered locus">Bcer98_3024</name>
</gene>